<gene>
    <name evidence="1" type="primary">queA</name>
    <name type="ordered locus">BcerKBAB4_4265</name>
</gene>
<comment type="function">
    <text evidence="1">Transfers and isomerizes the ribose moiety from AdoMet to the 7-aminomethyl group of 7-deazaguanine (preQ1-tRNA) to give epoxyqueuosine (oQ-tRNA).</text>
</comment>
<comment type="catalytic activity">
    <reaction evidence="1">
        <text>7-aminomethyl-7-carbaguanosine(34) in tRNA + S-adenosyl-L-methionine = epoxyqueuosine(34) in tRNA + adenine + L-methionine + 2 H(+)</text>
        <dbReference type="Rhea" id="RHEA:32155"/>
        <dbReference type="Rhea" id="RHEA-COMP:10342"/>
        <dbReference type="Rhea" id="RHEA-COMP:18582"/>
        <dbReference type="ChEBI" id="CHEBI:15378"/>
        <dbReference type="ChEBI" id="CHEBI:16708"/>
        <dbReference type="ChEBI" id="CHEBI:57844"/>
        <dbReference type="ChEBI" id="CHEBI:59789"/>
        <dbReference type="ChEBI" id="CHEBI:82833"/>
        <dbReference type="ChEBI" id="CHEBI:194443"/>
        <dbReference type="EC" id="2.4.99.17"/>
    </reaction>
</comment>
<comment type="pathway">
    <text evidence="1">tRNA modification; tRNA-queuosine biosynthesis.</text>
</comment>
<comment type="subunit">
    <text evidence="1">Monomer.</text>
</comment>
<comment type="subcellular location">
    <subcellularLocation>
        <location evidence="1">Cytoplasm</location>
    </subcellularLocation>
</comment>
<comment type="similarity">
    <text evidence="1">Belongs to the QueA family.</text>
</comment>
<feature type="chain" id="PRO_1000094751" description="S-adenosylmethionine:tRNA ribosyltransferase-isomerase">
    <location>
        <begin position="1"/>
        <end position="350"/>
    </location>
</feature>
<dbReference type="EC" id="2.4.99.17" evidence="1"/>
<dbReference type="EMBL" id="CP000903">
    <property type="protein sequence ID" value="ABY45424.1"/>
    <property type="molecule type" value="Genomic_DNA"/>
</dbReference>
<dbReference type="RefSeq" id="WP_012261748.1">
    <property type="nucleotide sequence ID" value="NC_010184.1"/>
</dbReference>
<dbReference type="SMR" id="A9VIP4"/>
<dbReference type="KEGG" id="bwe:BcerKBAB4_4265"/>
<dbReference type="eggNOG" id="COG0809">
    <property type="taxonomic scope" value="Bacteria"/>
</dbReference>
<dbReference type="HOGENOM" id="CLU_039110_1_0_9"/>
<dbReference type="UniPathway" id="UPA00392"/>
<dbReference type="Proteomes" id="UP000002154">
    <property type="component" value="Chromosome"/>
</dbReference>
<dbReference type="GO" id="GO:0005737">
    <property type="term" value="C:cytoplasm"/>
    <property type="evidence" value="ECO:0007669"/>
    <property type="project" value="UniProtKB-SubCell"/>
</dbReference>
<dbReference type="GO" id="GO:0051075">
    <property type="term" value="F:S-adenosylmethionine:tRNA ribosyltransferase-isomerase activity"/>
    <property type="evidence" value="ECO:0007669"/>
    <property type="project" value="UniProtKB-EC"/>
</dbReference>
<dbReference type="GO" id="GO:0008616">
    <property type="term" value="P:queuosine biosynthetic process"/>
    <property type="evidence" value="ECO:0007669"/>
    <property type="project" value="UniProtKB-UniRule"/>
</dbReference>
<dbReference type="GO" id="GO:0002099">
    <property type="term" value="P:tRNA wobble guanine modification"/>
    <property type="evidence" value="ECO:0007669"/>
    <property type="project" value="TreeGrafter"/>
</dbReference>
<dbReference type="FunFam" id="2.40.10.240:FF:000002">
    <property type="entry name" value="S-adenosylmethionine:tRNA ribosyltransferase-isomerase"/>
    <property type="match status" value="1"/>
</dbReference>
<dbReference type="FunFam" id="3.40.1780.10:FF:000001">
    <property type="entry name" value="S-adenosylmethionine:tRNA ribosyltransferase-isomerase"/>
    <property type="match status" value="1"/>
</dbReference>
<dbReference type="Gene3D" id="2.40.10.240">
    <property type="entry name" value="QueA-like"/>
    <property type="match status" value="1"/>
</dbReference>
<dbReference type="Gene3D" id="3.40.1780.10">
    <property type="entry name" value="QueA-like"/>
    <property type="match status" value="1"/>
</dbReference>
<dbReference type="HAMAP" id="MF_00113">
    <property type="entry name" value="QueA"/>
    <property type="match status" value="1"/>
</dbReference>
<dbReference type="InterPro" id="IPR003699">
    <property type="entry name" value="QueA"/>
</dbReference>
<dbReference type="InterPro" id="IPR042118">
    <property type="entry name" value="QueA_dom1"/>
</dbReference>
<dbReference type="InterPro" id="IPR042119">
    <property type="entry name" value="QueA_dom2"/>
</dbReference>
<dbReference type="InterPro" id="IPR036100">
    <property type="entry name" value="QueA_sf"/>
</dbReference>
<dbReference type="NCBIfam" id="NF001140">
    <property type="entry name" value="PRK00147.1"/>
    <property type="match status" value="1"/>
</dbReference>
<dbReference type="NCBIfam" id="TIGR00113">
    <property type="entry name" value="queA"/>
    <property type="match status" value="1"/>
</dbReference>
<dbReference type="PANTHER" id="PTHR30307">
    <property type="entry name" value="S-ADENOSYLMETHIONINE:TRNA RIBOSYLTRANSFERASE-ISOMERASE"/>
    <property type="match status" value="1"/>
</dbReference>
<dbReference type="PANTHER" id="PTHR30307:SF0">
    <property type="entry name" value="S-ADENOSYLMETHIONINE:TRNA RIBOSYLTRANSFERASE-ISOMERASE"/>
    <property type="match status" value="1"/>
</dbReference>
<dbReference type="Pfam" id="PF02547">
    <property type="entry name" value="Queuosine_synth"/>
    <property type="match status" value="1"/>
</dbReference>
<dbReference type="SUPFAM" id="SSF111337">
    <property type="entry name" value="QueA-like"/>
    <property type="match status" value="1"/>
</dbReference>
<keyword id="KW-0963">Cytoplasm</keyword>
<keyword id="KW-0671">Queuosine biosynthesis</keyword>
<keyword id="KW-0949">S-adenosyl-L-methionine</keyword>
<keyword id="KW-0808">Transferase</keyword>
<proteinExistence type="inferred from homology"/>
<organism>
    <name type="scientific">Bacillus mycoides (strain KBAB4)</name>
    <name type="common">Bacillus weihenstephanensis</name>
    <dbReference type="NCBI Taxonomy" id="315730"/>
    <lineage>
        <taxon>Bacteria</taxon>
        <taxon>Bacillati</taxon>
        <taxon>Bacillota</taxon>
        <taxon>Bacilli</taxon>
        <taxon>Bacillales</taxon>
        <taxon>Bacillaceae</taxon>
        <taxon>Bacillus</taxon>
        <taxon>Bacillus cereus group</taxon>
    </lineage>
</organism>
<reference key="1">
    <citation type="journal article" date="2008" name="Chem. Biol. Interact.">
        <title>Extending the Bacillus cereus group genomics to putative food-borne pathogens of different toxicity.</title>
        <authorList>
            <person name="Lapidus A."/>
            <person name="Goltsman E."/>
            <person name="Auger S."/>
            <person name="Galleron N."/>
            <person name="Segurens B."/>
            <person name="Dossat C."/>
            <person name="Land M.L."/>
            <person name="Broussolle V."/>
            <person name="Brillard J."/>
            <person name="Guinebretiere M.-H."/>
            <person name="Sanchis V."/>
            <person name="Nguen-the C."/>
            <person name="Lereclus D."/>
            <person name="Richardson P."/>
            <person name="Wincker P."/>
            <person name="Weissenbach J."/>
            <person name="Ehrlich S.D."/>
            <person name="Sorokin A."/>
        </authorList>
    </citation>
    <scope>NUCLEOTIDE SEQUENCE [LARGE SCALE GENOMIC DNA]</scope>
    <source>
        <strain>KBAB4</strain>
    </source>
</reference>
<name>QUEA_BACMK</name>
<protein>
    <recommendedName>
        <fullName evidence="1">S-adenosylmethionine:tRNA ribosyltransferase-isomerase</fullName>
        <ecNumber evidence="1">2.4.99.17</ecNumber>
    </recommendedName>
    <alternativeName>
        <fullName evidence="1">Queuosine biosynthesis protein QueA</fullName>
    </alternativeName>
</protein>
<accession>A9VIP4</accession>
<evidence type="ECO:0000255" key="1">
    <source>
        <dbReference type="HAMAP-Rule" id="MF_00113"/>
    </source>
</evidence>
<sequence>MDINLFDFHLPEELIAQIPLEERETSRLMVLDRETGDIEHKHFADILSYLQEGDCLVLNETKVMPARLHGVKEDTGAHIEVLLLKQEEGDKWETLIKPAKRVKEGTVISFGEGKLKATCIGTADQGGRQLEFSYDGIFYEILDELGEMPLPPYIKETLEDRDRYQTVYAKEIGSAAAPTAGLHFTEELLEKLKQKGVGLAFITLHVGLGTFRPVSADTIEEHHMHAEYYHMSEETAALLNRVKEDGGRIITVGTTSTRTLETIATDHSGKLCAASGWTDIFMYPGYEFKAIDGLITNFHLPKSTLIMLVSAFSNRDNVLHAYNEAVKEKYRFFSFGDAMFVASHAKMRNK</sequence>